<comment type="subcellular location">
    <subcellularLocation>
        <location evidence="1 3">Secreted</location>
    </subcellularLocation>
</comment>
<comment type="tissue specificity">
    <text evidence="1">Expressed in the antennal lobe (at protein level).</text>
</comment>
<sequence length="10" mass="1075">APLMGFQGVR</sequence>
<dbReference type="GO" id="GO:0005576">
    <property type="term" value="C:extracellular region"/>
    <property type="evidence" value="ECO:0007005"/>
    <property type="project" value="UniProtKB"/>
</dbReference>
<dbReference type="GO" id="GO:0007218">
    <property type="term" value="P:neuropeptide signaling pathway"/>
    <property type="evidence" value="ECO:0007669"/>
    <property type="project" value="UniProtKB-KW"/>
</dbReference>
<feature type="peptide" id="PRO_0000395648" description="Tachykinin-related peptide 5" evidence="1">
    <location>
        <begin position="1"/>
        <end position="10"/>
    </location>
</feature>
<feature type="modified residue" description="Arginine amide" evidence="1">
    <location>
        <position position="10"/>
    </location>
</feature>
<organism>
    <name type="scientific">Nezara viridula</name>
    <name type="common">Southern green stink bug</name>
    <name type="synonym">Cimex viridulus</name>
    <dbReference type="NCBI Taxonomy" id="85310"/>
    <lineage>
        <taxon>Eukaryota</taxon>
        <taxon>Metazoa</taxon>
        <taxon>Ecdysozoa</taxon>
        <taxon>Arthropoda</taxon>
        <taxon>Hexapoda</taxon>
        <taxon>Insecta</taxon>
        <taxon>Pterygota</taxon>
        <taxon>Neoptera</taxon>
        <taxon>Paraneoptera</taxon>
        <taxon>Hemiptera</taxon>
        <taxon>Heteroptera</taxon>
        <taxon>Panheteroptera</taxon>
        <taxon>Pentatomomorpha</taxon>
        <taxon>Pentatomoidea</taxon>
        <taxon>Pentatomidae</taxon>
        <taxon>Pentatominae</taxon>
        <taxon>Nezara</taxon>
    </lineage>
</organism>
<protein>
    <recommendedName>
        <fullName evidence="2">Tachykinin-related peptide 5</fullName>
        <shortName evidence="2">TKRP-5</shortName>
    </recommendedName>
</protein>
<proteinExistence type="evidence at protein level"/>
<name>TRP5_NEZVI</name>
<accession>P86579</accession>
<keyword id="KW-0027">Amidation</keyword>
<keyword id="KW-0903">Direct protein sequencing</keyword>
<keyword id="KW-0527">Neuropeptide</keyword>
<keyword id="KW-0964">Secreted</keyword>
<evidence type="ECO:0000269" key="1">
    <source>
    </source>
</evidence>
<evidence type="ECO:0000303" key="2">
    <source>
    </source>
</evidence>
<evidence type="ECO:0000305" key="3"/>
<reference evidence="3" key="1">
    <citation type="journal article" date="2009" name="Peptides">
        <title>Neuropeptides in Heteroptera: identification of allatotropin-related peptide and tachykinin-related peptides using MALDI-TOF mass spectrometry.</title>
        <authorList>
            <person name="Neupert S."/>
            <person name="Russell W.K."/>
            <person name="Russell D.H."/>
            <person name="Lopez J.D. Jr."/>
            <person name="Predel R."/>
            <person name="Nachman R.J."/>
        </authorList>
    </citation>
    <scope>PROTEIN SEQUENCE</scope>
    <scope>SUBCELLULAR LOCATION</scope>
    <scope>TISSUE SPECIFICITY</scope>
    <scope>AMIDATION AT ARG-10</scope>
    <source>
        <tissue evidence="1">Antennal lobe</tissue>
    </source>
</reference>